<sequence>MIIRSPEPEVKILVDRDPVKTSFEEWARPGHFSRTIAKGPDTTTWIWNLHADAHDFDSHTSDLEEISRKIFSAHFGQLSIIFLWLSGMYFHGARFSNYEAWLSDPTHIGPSAQVVWPIVGQEILNGDVGGGFRGIQITSGFFQIWRASGITSELQLYCTAIGALVFAALMLFAGWFHYHKAAPKLAWFQDVESMLNHHLAGLLGLGSLSWAGHQVHVSLPINQFLNAGVDPKEIPLPHEFILNRDLLAQLYPSFAEGATPFFTLNWSKYAEFLTFRGGLDPVTGGLWLTDIAHHHLAIAILFLIAGHMYKTNWGIGHSLKDILEAHKGPFTGQGHKGLYEILTTSWHAQLSLNLAMLGSLTIVVAHHMYSMPPYPYLATDYGTQLSLFTHHMWIGGFLIVGAAAHAAIFMVRDYDPTTRYNDLLDRVLRHRDAIISHLNWVCIFLGFHSFGLYIHNDTMSALGRPQDMFSDTAIQLQPVFAQWIQNTHTLAPGATAPGATASTSLTWGGGDLVAVGGKVALLPIPLGTADFLVHHIHAFTIHVTVLILLKGVLFARSSRLIPDKANLGFRFPCDGPGRGGTCQVSAWDHVFLGLFWMYNSISVVIFHFSWKMQSDVWGTISDQGVVTHITGGNFAQSSITINGWLRDFLWAQASQVIQSYGSSLSAYGLLFLGAHFVWAFSLMFLFSGRGYWQELIESIVWAHNKLKVAPATQPRALSIVQGRAVGVTHYLLGGIATTWAFFLARIIAVG</sequence>
<dbReference type="EC" id="1.97.1.12" evidence="1"/>
<dbReference type="EMBL" id="DQ345959">
    <property type="protein sequence ID" value="ABC73628.1"/>
    <property type="molecule type" value="Genomic_DNA"/>
</dbReference>
<dbReference type="RefSeq" id="YP_538935.1">
    <property type="nucleotide sequence ID" value="NC_007944.1"/>
</dbReference>
<dbReference type="SMR" id="Q2L907"/>
<dbReference type="GeneID" id="3989214"/>
<dbReference type="KEGG" id="ghi:3989214"/>
<dbReference type="OrthoDB" id="16427at41938"/>
<dbReference type="Proteomes" id="UP000189702">
    <property type="component" value="Chloroplast Pltd"/>
</dbReference>
<dbReference type="GO" id="GO:0009535">
    <property type="term" value="C:chloroplast thylakoid membrane"/>
    <property type="evidence" value="ECO:0007669"/>
    <property type="project" value="UniProtKB-SubCell"/>
</dbReference>
<dbReference type="GO" id="GO:0009522">
    <property type="term" value="C:photosystem I"/>
    <property type="evidence" value="ECO:0007669"/>
    <property type="project" value="UniProtKB-KW"/>
</dbReference>
<dbReference type="GO" id="GO:0051539">
    <property type="term" value="F:4 iron, 4 sulfur cluster binding"/>
    <property type="evidence" value="ECO:0007669"/>
    <property type="project" value="UniProtKB-KW"/>
</dbReference>
<dbReference type="GO" id="GO:0016168">
    <property type="term" value="F:chlorophyll binding"/>
    <property type="evidence" value="ECO:0007669"/>
    <property type="project" value="UniProtKB-KW"/>
</dbReference>
<dbReference type="GO" id="GO:0009055">
    <property type="term" value="F:electron transfer activity"/>
    <property type="evidence" value="ECO:0007669"/>
    <property type="project" value="UniProtKB-UniRule"/>
</dbReference>
<dbReference type="GO" id="GO:0000287">
    <property type="term" value="F:magnesium ion binding"/>
    <property type="evidence" value="ECO:0007669"/>
    <property type="project" value="UniProtKB-UniRule"/>
</dbReference>
<dbReference type="GO" id="GO:0016491">
    <property type="term" value="F:oxidoreductase activity"/>
    <property type="evidence" value="ECO:0007669"/>
    <property type="project" value="UniProtKB-KW"/>
</dbReference>
<dbReference type="GO" id="GO:0015979">
    <property type="term" value="P:photosynthesis"/>
    <property type="evidence" value="ECO:0007669"/>
    <property type="project" value="UniProtKB-UniRule"/>
</dbReference>
<dbReference type="FunFam" id="1.20.1130.10:FF:000001">
    <property type="entry name" value="Photosystem I P700 chlorophyll a apoprotein A2"/>
    <property type="match status" value="1"/>
</dbReference>
<dbReference type="Gene3D" id="1.20.1130.10">
    <property type="entry name" value="Photosystem I PsaA/PsaB"/>
    <property type="match status" value="1"/>
</dbReference>
<dbReference type="HAMAP" id="MF_00458">
    <property type="entry name" value="PSI_PsaA"/>
    <property type="match status" value="1"/>
</dbReference>
<dbReference type="InterPro" id="IPR006243">
    <property type="entry name" value="PSI_PsaA"/>
</dbReference>
<dbReference type="InterPro" id="IPR001280">
    <property type="entry name" value="PSI_PsaA/B"/>
</dbReference>
<dbReference type="InterPro" id="IPR020586">
    <property type="entry name" value="PSI_PsaA/B_CS"/>
</dbReference>
<dbReference type="InterPro" id="IPR036408">
    <property type="entry name" value="PSI_PsaA/B_sf"/>
</dbReference>
<dbReference type="NCBIfam" id="TIGR01335">
    <property type="entry name" value="psaA"/>
    <property type="match status" value="1"/>
</dbReference>
<dbReference type="PANTHER" id="PTHR30128">
    <property type="entry name" value="OUTER MEMBRANE PROTEIN, OMPA-RELATED"/>
    <property type="match status" value="1"/>
</dbReference>
<dbReference type="PANTHER" id="PTHR30128:SF19">
    <property type="entry name" value="PHOTOSYSTEM I P700 CHLOROPHYLL A APOPROTEIN A1-RELATED"/>
    <property type="match status" value="1"/>
</dbReference>
<dbReference type="Pfam" id="PF00223">
    <property type="entry name" value="PsaA_PsaB"/>
    <property type="match status" value="1"/>
</dbReference>
<dbReference type="PIRSF" id="PIRSF002905">
    <property type="entry name" value="PSI_A"/>
    <property type="match status" value="1"/>
</dbReference>
<dbReference type="PRINTS" id="PR00257">
    <property type="entry name" value="PHOTSYSPSAAB"/>
</dbReference>
<dbReference type="SUPFAM" id="SSF81558">
    <property type="entry name" value="Photosystem I subunits PsaA/PsaB"/>
    <property type="match status" value="1"/>
</dbReference>
<dbReference type="PROSITE" id="PS00419">
    <property type="entry name" value="PHOTOSYSTEM_I_PSAAB"/>
    <property type="match status" value="1"/>
</dbReference>
<gene>
    <name evidence="1" type="primary">psaA</name>
</gene>
<protein>
    <recommendedName>
        <fullName evidence="1">Photosystem I P700 chlorophyll a apoprotein A1</fullName>
        <ecNumber evidence="1">1.97.1.12</ecNumber>
    </recommendedName>
    <alternativeName>
        <fullName evidence="1">PSI-A</fullName>
    </alternativeName>
    <alternativeName>
        <fullName evidence="1">PsaA</fullName>
    </alternativeName>
</protein>
<reference key="1">
    <citation type="journal article" date="2006" name="BMC Genomics">
        <title>The complete chloroplast genome sequence of Gossypium hirsutum: organization and phylogenetic relationships to other angiosperms.</title>
        <authorList>
            <person name="Lee S.-B."/>
            <person name="Kaittanis C."/>
            <person name="Jansen R.K."/>
            <person name="Hostetler J.B."/>
            <person name="Tallon L.J."/>
            <person name="Town C.D."/>
            <person name="Daniell H."/>
        </authorList>
    </citation>
    <scope>NUCLEOTIDE SEQUENCE [LARGE SCALE GENOMIC DNA]</scope>
    <source>
        <strain>cv. Coker 310FR</strain>
    </source>
</reference>
<evidence type="ECO:0000255" key="1">
    <source>
        <dbReference type="HAMAP-Rule" id="MF_00458"/>
    </source>
</evidence>
<organism>
    <name type="scientific">Gossypium hirsutum</name>
    <name type="common">Upland cotton</name>
    <name type="synonym">Gossypium mexicanum</name>
    <dbReference type="NCBI Taxonomy" id="3635"/>
    <lineage>
        <taxon>Eukaryota</taxon>
        <taxon>Viridiplantae</taxon>
        <taxon>Streptophyta</taxon>
        <taxon>Embryophyta</taxon>
        <taxon>Tracheophyta</taxon>
        <taxon>Spermatophyta</taxon>
        <taxon>Magnoliopsida</taxon>
        <taxon>eudicotyledons</taxon>
        <taxon>Gunneridae</taxon>
        <taxon>Pentapetalae</taxon>
        <taxon>rosids</taxon>
        <taxon>malvids</taxon>
        <taxon>Malvales</taxon>
        <taxon>Malvaceae</taxon>
        <taxon>Malvoideae</taxon>
        <taxon>Gossypium</taxon>
    </lineage>
</organism>
<accession>Q2L907</accession>
<geneLocation type="chloroplast"/>
<name>PSAA_GOSHI</name>
<comment type="function">
    <text>PsaA and PsaB bind P700, the primary electron donor of photosystem I (PSI), as well as the electron acceptors A0, A1 and FX. PSI is a plastocyanin-ferredoxin oxidoreductase, converting photonic excitation into a charge separation, which transfers an electron from the donor P700 chlorophyll pair to the spectroscopically characterized acceptors A0, A1, FX, FA and FB in turn. Oxidized P700 is reduced on the lumenal side of the thylakoid membrane by plastocyanin.</text>
</comment>
<comment type="catalytic activity">
    <reaction evidence="1">
        <text>reduced [plastocyanin] + hnu + oxidized [2Fe-2S]-[ferredoxin] = oxidized [plastocyanin] + reduced [2Fe-2S]-[ferredoxin]</text>
        <dbReference type="Rhea" id="RHEA:30407"/>
        <dbReference type="Rhea" id="RHEA-COMP:10000"/>
        <dbReference type="Rhea" id="RHEA-COMP:10001"/>
        <dbReference type="Rhea" id="RHEA-COMP:10039"/>
        <dbReference type="Rhea" id="RHEA-COMP:10040"/>
        <dbReference type="ChEBI" id="CHEBI:29036"/>
        <dbReference type="ChEBI" id="CHEBI:30212"/>
        <dbReference type="ChEBI" id="CHEBI:33737"/>
        <dbReference type="ChEBI" id="CHEBI:33738"/>
        <dbReference type="ChEBI" id="CHEBI:49552"/>
        <dbReference type="EC" id="1.97.1.12"/>
    </reaction>
</comment>
<comment type="cofactor">
    <text evidence="1">P700 is a chlorophyll a/chlorophyll a' dimer, A0 is one or more chlorophyll a, A1 is one or both phylloquinones and FX is a shared 4Fe-4S iron-sulfur center.</text>
</comment>
<comment type="subunit">
    <text evidence="1">The PsaA/B heterodimer binds the P700 chlorophyll special pair and subsequent electron acceptors. PSI consists of a core antenna complex that captures photons, and an electron transfer chain that converts photonic excitation into a charge separation. The eukaryotic PSI reaction center is composed of at least 11 subunits.</text>
</comment>
<comment type="subcellular location">
    <subcellularLocation>
        <location evidence="1">Plastid</location>
        <location evidence="1">Chloroplast thylakoid membrane</location>
        <topology evidence="1">Multi-pass membrane protein</topology>
    </subcellularLocation>
</comment>
<comment type="similarity">
    <text evidence="1">Belongs to the PsaA/PsaB family.</text>
</comment>
<keyword id="KW-0004">4Fe-4S</keyword>
<keyword id="KW-0148">Chlorophyll</keyword>
<keyword id="KW-0150">Chloroplast</keyword>
<keyword id="KW-0157">Chromophore</keyword>
<keyword id="KW-0249">Electron transport</keyword>
<keyword id="KW-0408">Iron</keyword>
<keyword id="KW-0411">Iron-sulfur</keyword>
<keyword id="KW-0460">Magnesium</keyword>
<keyword id="KW-0472">Membrane</keyword>
<keyword id="KW-0479">Metal-binding</keyword>
<keyword id="KW-0560">Oxidoreductase</keyword>
<keyword id="KW-0602">Photosynthesis</keyword>
<keyword id="KW-0603">Photosystem I</keyword>
<keyword id="KW-0934">Plastid</keyword>
<keyword id="KW-1185">Reference proteome</keyword>
<keyword id="KW-0793">Thylakoid</keyword>
<keyword id="KW-0812">Transmembrane</keyword>
<keyword id="KW-1133">Transmembrane helix</keyword>
<keyword id="KW-0813">Transport</keyword>
<proteinExistence type="inferred from homology"/>
<feature type="chain" id="PRO_0000275946" description="Photosystem I P700 chlorophyll a apoprotein A1">
    <location>
        <begin position="1"/>
        <end position="750"/>
    </location>
</feature>
<feature type="transmembrane region" description="Helical; Name=I" evidence="1">
    <location>
        <begin position="70"/>
        <end position="93"/>
    </location>
</feature>
<feature type="transmembrane region" description="Helical; Name=II" evidence="1">
    <location>
        <begin position="156"/>
        <end position="179"/>
    </location>
</feature>
<feature type="transmembrane region" description="Helical; Name=III" evidence="1">
    <location>
        <begin position="195"/>
        <end position="219"/>
    </location>
</feature>
<feature type="transmembrane region" description="Helical; Name=IV" evidence="1">
    <location>
        <begin position="291"/>
        <end position="309"/>
    </location>
</feature>
<feature type="transmembrane region" description="Helical; Name=V" evidence="1">
    <location>
        <begin position="346"/>
        <end position="369"/>
    </location>
</feature>
<feature type="transmembrane region" description="Helical; Name=VI" evidence="1">
    <location>
        <begin position="385"/>
        <end position="411"/>
    </location>
</feature>
<feature type="transmembrane region" description="Helical; Name=VII" evidence="1">
    <location>
        <begin position="433"/>
        <end position="455"/>
    </location>
</feature>
<feature type="transmembrane region" description="Helical; Name=VIII" evidence="1">
    <location>
        <begin position="531"/>
        <end position="549"/>
    </location>
</feature>
<feature type="transmembrane region" description="Helical; Name=IX" evidence="1">
    <location>
        <begin position="589"/>
        <end position="610"/>
    </location>
</feature>
<feature type="transmembrane region" description="Helical; Name=X" evidence="1">
    <location>
        <begin position="664"/>
        <end position="686"/>
    </location>
</feature>
<feature type="transmembrane region" description="Helical; Name=XI" evidence="1">
    <location>
        <begin position="724"/>
        <end position="744"/>
    </location>
</feature>
<feature type="binding site" evidence="1">
    <location>
        <position position="573"/>
    </location>
    <ligand>
        <name>[4Fe-4S] cluster</name>
        <dbReference type="ChEBI" id="CHEBI:49883"/>
        <note>ligand shared between dimeric partners</note>
    </ligand>
</feature>
<feature type="binding site" evidence="1">
    <location>
        <position position="582"/>
    </location>
    <ligand>
        <name>[4Fe-4S] cluster</name>
        <dbReference type="ChEBI" id="CHEBI:49883"/>
        <note>ligand shared between dimeric partners</note>
    </ligand>
</feature>
<feature type="binding site" description="axial binding residue" evidence="1">
    <location>
        <position position="675"/>
    </location>
    <ligand>
        <name>chlorophyll a'</name>
        <dbReference type="ChEBI" id="CHEBI:189419"/>
        <label>A1</label>
    </ligand>
    <ligandPart>
        <name>Mg</name>
        <dbReference type="ChEBI" id="CHEBI:25107"/>
    </ligandPart>
</feature>
<feature type="binding site" description="axial binding residue" evidence="1">
    <location>
        <position position="683"/>
    </location>
    <ligand>
        <name>chlorophyll a</name>
        <dbReference type="ChEBI" id="CHEBI:58416"/>
        <label>A3</label>
    </ligand>
    <ligandPart>
        <name>Mg</name>
        <dbReference type="ChEBI" id="CHEBI:25107"/>
    </ligandPart>
</feature>
<feature type="binding site" evidence="1">
    <location>
        <position position="691"/>
    </location>
    <ligand>
        <name>chlorophyll a</name>
        <dbReference type="ChEBI" id="CHEBI:58416"/>
        <label>A3</label>
    </ligand>
</feature>
<feature type="binding site" evidence="1">
    <location>
        <position position="692"/>
    </location>
    <ligand>
        <name>phylloquinone</name>
        <dbReference type="ChEBI" id="CHEBI:18067"/>
        <label>A</label>
    </ligand>
</feature>